<evidence type="ECO:0000255" key="1">
    <source>
        <dbReference type="HAMAP-Rule" id="MF_00362"/>
    </source>
</evidence>
<evidence type="ECO:0000305" key="2"/>
<keyword id="KW-0687">Ribonucleoprotein</keyword>
<keyword id="KW-0689">Ribosomal protein</keyword>
<keyword id="KW-0694">RNA-binding</keyword>
<keyword id="KW-0699">rRNA-binding</keyword>
<protein>
    <recommendedName>
        <fullName evidence="1">Large ribosomal subunit protein uL10</fullName>
    </recommendedName>
    <alternativeName>
        <fullName evidence="2">50S ribosomal protein L10</fullName>
    </alternativeName>
</protein>
<sequence length="173" mass="18747">MKRPEKEAVVAQLTEEFRNADAVYLTEYRGLTVPQISDLREKLGRDTSYTVAKNTLARIAAKEAGIEGLDEILSGPTAITFVKGDFIEAAKVIRDFAKDNKALVIKGAAADGTVYDAEGAKKLADLKSRPQLLAEFAGDIKASMAKAAYLFNALPTKAVRTIDALREKQEKAA</sequence>
<organism>
    <name type="scientific">Bifidobacterium longum subsp. infantis (strain ATCC 15697 / DSM 20088 / JCM 1222 / NCTC 11817 / S12)</name>
    <dbReference type="NCBI Taxonomy" id="391904"/>
    <lineage>
        <taxon>Bacteria</taxon>
        <taxon>Bacillati</taxon>
        <taxon>Actinomycetota</taxon>
        <taxon>Actinomycetes</taxon>
        <taxon>Bifidobacteriales</taxon>
        <taxon>Bifidobacteriaceae</taxon>
        <taxon>Bifidobacterium</taxon>
    </lineage>
</organism>
<dbReference type="EMBL" id="CP001095">
    <property type="protein sequence ID" value="ACJ53325.1"/>
    <property type="molecule type" value="Genomic_DNA"/>
</dbReference>
<dbReference type="EMBL" id="AP010889">
    <property type="protein sequence ID" value="BAJ69916.1"/>
    <property type="molecule type" value="Genomic_DNA"/>
</dbReference>
<dbReference type="RefSeq" id="WP_007053001.1">
    <property type="nucleotide sequence ID" value="NZ_JDTT01000030.1"/>
</dbReference>
<dbReference type="SMR" id="B7GNG9"/>
<dbReference type="GeneID" id="69578932"/>
<dbReference type="KEGG" id="bln:Blon_2267"/>
<dbReference type="KEGG" id="blon:BLIJ_2339"/>
<dbReference type="PATRIC" id="fig|391904.8.peg.2342"/>
<dbReference type="HOGENOM" id="CLU_092227_1_0_11"/>
<dbReference type="Proteomes" id="UP000001360">
    <property type="component" value="Chromosome"/>
</dbReference>
<dbReference type="GO" id="GO:0015934">
    <property type="term" value="C:large ribosomal subunit"/>
    <property type="evidence" value="ECO:0007669"/>
    <property type="project" value="InterPro"/>
</dbReference>
<dbReference type="GO" id="GO:0070180">
    <property type="term" value="F:large ribosomal subunit rRNA binding"/>
    <property type="evidence" value="ECO:0007669"/>
    <property type="project" value="UniProtKB-UniRule"/>
</dbReference>
<dbReference type="GO" id="GO:0003735">
    <property type="term" value="F:structural constituent of ribosome"/>
    <property type="evidence" value="ECO:0007669"/>
    <property type="project" value="InterPro"/>
</dbReference>
<dbReference type="GO" id="GO:0006412">
    <property type="term" value="P:translation"/>
    <property type="evidence" value="ECO:0007669"/>
    <property type="project" value="UniProtKB-UniRule"/>
</dbReference>
<dbReference type="CDD" id="cd05797">
    <property type="entry name" value="Ribosomal_L10"/>
    <property type="match status" value="1"/>
</dbReference>
<dbReference type="Gene3D" id="3.30.70.1730">
    <property type="match status" value="1"/>
</dbReference>
<dbReference type="Gene3D" id="6.10.250.290">
    <property type="match status" value="1"/>
</dbReference>
<dbReference type="HAMAP" id="MF_00362">
    <property type="entry name" value="Ribosomal_uL10"/>
    <property type="match status" value="1"/>
</dbReference>
<dbReference type="InterPro" id="IPR001790">
    <property type="entry name" value="Ribosomal_uL10"/>
</dbReference>
<dbReference type="InterPro" id="IPR043141">
    <property type="entry name" value="Ribosomal_uL10-like_sf"/>
</dbReference>
<dbReference type="InterPro" id="IPR022973">
    <property type="entry name" value="Ribosomal_uL10_bac"/>
</dbReference>
<dbReference type="InterPro" id="IPR047865">
    <property type="entry name" value="Ribosomal_uL10_bac_type"/>
</dbReference>
<dbReference type="InterPro" id="IPR002363">
    <property type="entry name" value="Ribosomal_uL10_CS_bac"/>
</dbReference>
<dbReference type="NCBIfam" id="NF000955">
    <property type="entry name" value="PRK00099.1-1"/>
    <property type="match status" value="1"/>
</dbReference>
<dbReference type="PANTHER" id="PTHR11560">
    <property type="entry name" value="39S RIBOSOMAL PROTEIN L10, MITOCHONDRIAL"/>
    <property type="match status" value="1"/>
</dbReference>
<dbReference type="Pfam" id="PF00466">
    <property type="entry name" value="Ribosomal_L10"/>
    <property type="match status" value="1"/>
</dbReference>
<dbReference type="SUPFAM" id="SSF160369">
    <property type="entry name" value="Ribosomal protein L10-like"/>
    <property type="match status" value="1"/>
</dbReference>
<dbReference type="PROSITE" id="PS01109">
    <property type="entry name" value="RIBOSOMAL_L10"/>
    <property type="match status" value="1"/>
</dbReference>
<gene>
    <name evidence="1" type="primary">rplJ</name>
    <name type="ordered locus">Blon_2267</name>
    <name type="ordered locus">BLIJ_2339</name>
</gene>
<reference key="1">
    <citation type="journal article" date="2008" name="Proc. Natl. Acad. Sci. U.S.A.">
        <title>The genome sequence of Bifidobacterium longum subsp. infantis reveals adaptations for milk utilization within the infant microbiome.</title>
        <authorList>
            <person name="Sela D.A."/>
            <person name="Chapman J."/>
            <person name="Adeuya A."/>
            <person name="Kim J.H."/>
            <person name="Chen F."/>
            <person name="Whitehead T.R."/>
            <person name="Lapidus A."/>
            <person name="Rokhsar D.S."/>
            <person name="Lebrilla C.B."/>
            <person name="German J.B."/>
            <person name="Price N.P."/>
            <person name="Richardson P.M."/>
            <person name="Mills D.A."/>
        </authorList>
    </citation>
    <scope>NUCLEOTIDE SEQUENCE [LARGE SCALE GENOMIC DNA]</scope>
    <source>
        <strain>ATCC 15697 / DSM 20088 / JCM 1222 / NCTC 11817 / S12</strain>
    </source>
</reference>
<reference key="2">
    <citation type="journal article" date="2011" name="Nature">
        <title>Bifidobacteria can protect from enteropathogenic infection through production of acetate.</title>
        <authorList>
            <person name="Fukuda S."/>
            <person name="Toh H."/>
            <person name="Hase K."/>
            <person name="Oshima K."/>
            <person name="Nakanishi Y."/>
            <person name="Yoshimura K."/>
            <person name="Tobe T."/>
            <person name="Clarke J.M."/>
            <person name="Topping D.L."/>
            <person name="Suzuki T."/>
            <person name="Taylor T.D."/>
            <person name="Itoh K."/>
            <person name="Kikuchi J."/>
            <person name="Morita H."/>
            <person name="Hattori M."/>
            <person name="Ohno H."/>
        </authorList>
    </citation>
    <scope>NUCLEOTIDE SEQUENCE [LARGE SCALE GENOMIC DNA]</scope>
    <source>
        <strain>ATCC 15697 / DSM 20088 / JCM 1222 / NCTC 11817 / S12</strain>
    </source>
</reference>
<proteinExistence type="inferred from homology"/>
<name>RL10_BIFLS</name>
<feature type="chain" id="PRO_1000195529" description="Large ribosomal subunit protein uL10">
    <location>
        <begin position="1"/>
        <end position="173"/>
    </location>
</feature>
<accession>B7GNG9</accession>
<accession>E8MNB3</accession>
<comment type="function">
    <text evidence="1">Forms part of the ribosomal stalk, playing a central role in the interaction of the ribosome with GTP-bound translation factors.</text>
</comment>
<comment type="subunit">
    <text evidence="1">Part of the ribosomal stalk of the 50S ribosomal subunit. The N-terminus interacts with L11 and the large rRNA to form the base of the stalk. The C-terminus forms an elongated spine to which L12 dimers bind in a sequential fashion forming a multimeric L10(L12)X complex.</text>
</comment>
<comment type="similarity">
    <text evidence="1">Belongs to the universal ribosomal protein uL10 family.</text>
</comment>